<organism>
    <name type="scientific">Pongo abelii</name>
    <name type="common">Sumatran orangutan</name>
    <name type="synonym">Pongo pygmaeus abelii</name>
    <dbReference type="NCBI Taxonomy" id="9601"/>
    <lineage>
        <taxon>Eukaryota</taxon>
        <taxon>Metazoa</taxon>
        <taxon>Chordata</taxon>
        <taxon>Craniata</taxon>
        <taxon>Vertebrata</taxon>
        <taxon>Euteleostomi</taxon>
        <taxon>Mammalia</taxon>
        <taxon>Eutheria</taxon>
        <taxon>Euarchontoglires</taxon>
        <taxon>Primates</taxon>
        <taxon>Haplorrhini</taxon>
        <taxon>Catarrhini</taxon>
        <taxon>Hominidae</taxon>
        <taxon>Pongo</taxon>
    </lineage>
</organism>
<sequence>MTFSEILDRVGSMGRFQFLHVAILGLPILNMANHNLLQIFTAATPVHHCRPPPNASTGPWVLPMGPNGKPERCLRFVHPPNASLPNETQRATEPCLDGWVYNSTKDSIVTEWDLVCNSNKLKEMAQSIFMAGILIGGLVLGDLSDRFGRRPILTCSYLLLAASGSGAAFSPTFPIYMVFRFLCGFGISGITLSTVILNVEWVPTRMRAIMSTALGYCYTFGQFILPGLAYAIPQWRWLQLTVSIPFFIFFLSSWWTPESIRWLVLSGKSSKALKILRRVAAFNGKKEEGERLSLEELKLNLQKEIALAKAKYTASDLFRIPMLRRMTFCLSLAWFATGFAYYSLAMGVEEFGVNLYILQIIFGGVDVPAKFITILSLSYLGRHTTQAAALLLAGGAILALTFVPLDLQTVRTVLAVFGKGCLPSSFSCLFLYTSELYPTVIRQTGMGVSNLWTRVGSMLSPLVKITGEVQPFIPNIIYGITALLGGSAAFFLPETLNQPLPETIEDLENWSLRAKKPKQEPEVEKASQRIPLQPHGPGLGSS</sequence>
<proteinExistence type="evidence at transcript level"/>
<comment type="function">
    <text evidence="2 3 4">Functions as an organic anion/dicarboxylate exchanger that couples organic anion uptake indirectly to the sodium gradient. Transports organic anions such as estrone 3-sulfate (E1S) and urate in exchange for dicarboxylates such as glutarate or ketoglutarate (2-oxoglutarate) (By similarity). Plays an important role in the excretion of endogenous and exogenous organic anions, especially from the kidney and the brain (By similarity). E1S transport is pH- and chloride-dependent and may also involve E1S/cGMP exchange (By similarity). Responsible for the transport of prostaglandin E2 (PGE2) and prostaglandin F2(alpha) (PGF2(alpha)) in the basolateral side of the renal tubule. Involved in the transport of neuroactive tryptophan metabolites kynurenate and xanthurenate. Functions as a biopterin transporters involved in the uptake and the secretion of coenzymes tetrahydrobiopterin (BH4), dihydrobiopterin (BH2) and sepiapterin to urine, thereby determining baseline levels of blood biopterins. May be involved in the basolateral transport of steviol, a metabolite of the popular sugar substitute stevioside. May participate in the detoxification/ renal excretion of drugs and xenobiotics, such as the histamine H(2)-receptor antagonists fexofenadine and cimetidine, the antibiotic benzylpenicillin (PCG), the anionic herbicide 2,4-dichloro-phenoxyacetate (2,4-D), the diagnostic agent p-aminohippurate (PAH), the antiviral acyclovir (ACV), and the mycotoxin ochratoxin (OTA), by transporting these exogenous organic anions across the cell membrane in exchange for dicarboxylates such as 2-oxoglutarate (By similarity). Contributes to the renal uptake of potent uremic toxins (indoxyl sulfate (IS), indole acetate (IA), hippurate/N-benzoylglycine (HA) and 3-carboxy-4-methyl-5-propyl-2-furanpropionate (CMPF)), pravastatin, PCG, E1S and dehydroepiandrosterone sulfate (DHEAS), and is partly involved in the renal uptake of temocaprilat (an angiotensin-converting enzyme (ACE) inhibitor) (By similarity). May contribute to the release of cortisol in the adrenals (By similarity). Involved in one of the detoxification systems on the choroid plexus (CP), removes substrates such as E1S or taurocholate (TC), PCG, 2,4-D and PAH, from the cerebrospinal fluid (CSF) to the blood for eventual excretion in urine and bile (By similarity). Also contributes to the uptake of several other organic compounds such as the prostanoids prostaglandin E(2) and prostaglandin F(2-alpha), L-carnitine, and the therapeutic drugs allopurinol, 6-mercaptopurine (6-MP) and 5-fluorouracil (5-FU) (By similarity). Mediates the transport of PAH, PCG, and the statins pravastatin and pitavastatin, from the cerebrum into the blood circulation across the blood-brain barrier (BBB). In summary, plays a role in the efflux of drugs and xenobiotics, helping reduce their undesired toxicological effects on the body (By similarity).</text>
</comment>
<comment type="catalytic activity">
    <reaction evidence="3">
        <text>estrone 3-sulfate(out) + glutarate(in) = estrone 3-sulfate(in) + glutarate(out)</text>
        <dbReference type="Rhea" id="RHEA:72151"/>
        <dbReference type="ChEBI" id="CHEBI:30921"/>
        <dbReference type="ChEBI" id="CHEBI:60050"/>
    </reaction>
</comment>
<comment type="catalytic activity">
    <reaction evidence="3">
        <text>estrone 3-sulfate(in) + 2-oxoglutarate(out) = estrone 3-sulfate(out) + 2-oxoglutarate(in)</text>
        <dbReference type="Rhea" id="RHEA:72399"/>
        <dbReference type="ChEBI" id="CHEBI:16810"/>
        <dbReference type="ChEBI" id="CHEBI:60050"/>
    </reaction>
</comment>
<comment type="catalytic activity">
    <reaction evidence="3">
        <text>glutarate(in) + 2-oxoglutarate(out) = glutarate(out) + 2-oxoglutarate(in)</text>
        <dbReference type="Rhea" id="RHEA:71751"/>
        <dbReference type="ChEBI" id="CHEBI:16810"/>
        <dbReference type="ChEBI" id="CHEBI:30921"/>
    </reaction>
</comment>
<comment type="catalytic activity">
    <reaction evidence="3">
        <text>urate(in) + 2-oxoglutarate(out) = urate(out) + 2-oxoglutarate(in)</text>
        <dbReference type="Rhea" id="RHEA:72403"/>
        <dbReference type="ChEBI" id="CHEBI:16810"/>
        <dbReference type="ChEBI" id="CHEBI:17775"/>
    </reaction>
</comment>
<comment type="catalytic activity">
    <reaction evidence="2">
        <text>taurocholate(out) + glutarate(in) = taurocholate(in) + glutarate(out)</text>
        <dbReference type="Rhea" id="RHEA:72159"/>
        <dbReference type="ChEBI" id="CHEBI:30921"/>
        <dbReference type="ChEBI" id="CHEBI:36257"/>
    </reaction>
</comment>
<comment type="catalytic activity">
    <reaction evidence="2">
        <text>dehydroepiandrosterone 3-sulfate(out) + glutarate(in) = dehydroepiandrosterone 3-sulfate(in) + glutarate(out)</text>
        <dbReference type="Rhea" id="RHEA:72355"/>
        <dbReference type="ChEBI" id="CHEBI:30921"/>
        <dbReference type="ChEBI" id="CHEBI:57905"/>
    </reaction>
</comment>
<comment type="catalytic activity">
    <reaction evidence="2">
        <text>prostaglandin F2alpha(out) + glutarate(in) = prostaglandin F2alpha(in) + glutarate(out)</text>
        <dbReference type="Rhea" id="RHEA:72503"/>
        <dbReference type="ChEBI" id="CHEBI:30921"/>
        <dbReference type="ChEBI" id="CHEBI:57404"/>
    </reaction>
</comment>
<comment type="catalytic activity">
    <reaction evidence="2">
        <text>prostaglandin F2alpha(out) + 2-oxoglutarate(in) = prostaglandin F2alpha(in) + 2-oxoglutarate(out)</text>
        <dbReference type="Rhea" id="RHEA:72507"/>
        <dbReference type="ChEBI" id="CHEBI:16810"/>
        <dbReference type="ChEBI" id="CHEBI:57404"/>
    </reaction>
</comment>
<comment type="catalytic activity">
    <reaction evidence="2">
        <text>(R)-carnitine(out) + 2-oxoglutarate(in) = (R)-carnitine(in) + 2-oxoglutarate(out)</text>
        <dbReference type="Rhea" id="RHEA:72511"/>
        <dbReference type="ChEBI" id="CHEBI:16347"/>
        <dbReference type="ChEBI" id="CHEBI:16810"/>
    </reaction>
</comment>
<comment type="catalytic activity">
    <reaction evidence="2">
        <text>glutarate(in) + (R)-carnitine(out) = glutarate(out) + (R)-carnitine(in)</text>
        <dbReference type="Rhea" id="RHEA:72515"/>
        <dbReference type="ChEBI" id="CHEBI:16347"/>
        <dbReference type="ChEBI" id="CHEBI:30921"/>
    </reaction>
</comment>
<comment type="catalytic activity">
    <reaction evidence="2">
        <text>prostaglandin E2(out) + 2-oxoglutarate(in) = prostaglandin E2(in) + 2-oxoglutarate(out)</text>
        <dbReference type="Rhea" id="RHEA:72499"/>
        <dbReference type="ChEBI" id="CHEBI:16810"/>
        <dbReference type="ChEBI" id="CHEBI:606564"/>
    </reaction>
</comment>
<comment type="catalytic activity">
    <reaction evidence="2">
        <text>prostaglandin E2(out) + glutarate(in) = prostaglandin E2(in) + glutarate(out)</text>
        <dbReference type="Rhea" id="RHEA:72495"/>
        <dbReference type="ChEBI" id="CHEBI:30921"/>
        <dbReference type="ChEBI" id="CHEBI:606564"/>
    </reaction>
</comment>
<comment type="catalytic activity">
    <reaction evidence="3">
        <text>urate(in) + glutarate(out) = urate(out) + glutarate(in)</text>
        <dbReference type="Rhea" id="RHEA:72551"/>
        <dbReference type="ChEBI" id="CHEBI:17775"/>
        <dbReference type="ChEBI" id="CHEBI:30921"/>
    </reaction>
</comment>
<comment type="catalytic activity">
    <reaction evidence="2">
        <text>taurocholate(out) + 2-oxoglutarate(in) = taurocholate(in) + 2-oxoglutarate(out)</text>
        <dbReference type="Rhea" id="RHEA:72547"/>
        <dbReference type="ChEBI" id="CHEBI:16810"/>
        <dbReference type="ChEBI" id="CHEBI:36257"/>
    </reaction>
</comment>
<comment type="catalytic activity">
    <reaction evidence="2">
        <text>dehydroepiandrosterone 3-sulfate(out) + 2-oxoglutarate(in) = dehydroepiandrosterone 3-sulfate(in) + 2-oxoglutarate(out)</text>
        <dbReference type="Rhea" id="RHEA:72543"/>
        <dbReference type="ChEBI" id="CHEBI:16810"/>
        <dbReference type="ChEBI" id="CHEBI:57905"/>
    </reaction>
</comment>
<comment type="catalytic activity">
    <reaction evidence="3">
        <text>kynurenate(out) + a dicarboxylate(in) = kynurenate(in) + a dicarboxylate(out)</text>
        <dbReference type="Rhea" id="RHEA:76087"/>
        <dbReference type="ChEBI" id="CHEBI:28965"/>
        <dbReference type="ChEBI" id="CHEBI:58454"/>
    </reaction>
</comment>
<comment type="catalytic activity">
    <reaction evidence="3">
        <text>(indol-3-yl)acetate(out) + a dicarboxylate(in) = (indol-3-yl)acetate(in) + a dicarboxylate(out)</text>
        <dbReference type="Rhea" id="RHEA:75983"/>
        <dbReference type="ChEBI" id="CHEBI:28965"/>
        <dbReference type="ChEBI" id="CHEBI:30854"/>
    </reaction>
</comment>
<comment type="catalytic activity">
    <reaction evidence="3">
        <text>indoxyl sulfate(out) + a dicarboxylate(in) = indoxyl sulfate(in) + a dicarboxylate(out)</text>
        <dbReference type="Rhea" id="RHEA:75987"/>
        <dbReference type="ChEBI" id="CHEBI:28965"/>
        <dbReference type="ChEBI" id="CHEBI:144643"/>
    </reaction>
</comment>
<comment type="catalytic activity">
    <reaction evidence="3">
        <text>N-benzoylglycine(out) + a dicarboxylate(in) = N-benzoylglycine(in) + a dicarboxylate(out)</text>
        <dbReference type="Rhea" id="RHEA:75991"/>
        <dbReference type="ChEBI" id="CHEBI:28965"/>
        <dbReference type="ChEBI" id="CHEBI:606565"/>
    </reaction>
</comment>
<comment type="catalytic activity">
    <reaction evidence="3">
        <text>3-carboxy-4-methyl-5-propyl-2-furanpropanoate(out) + a dicarboxylate(in) = 3-carboxy-4-methyl-5-propyl-2-furanpropanoate(in) + a dicarboxylate(out)</text>
        <dbReference type="Rhea" id="RHEA:75995"/>
        <dbReference type="ChEBI" id="CHEBI:28965"/>
        <dbReference type="ChEBI" id="CHEBI:194524"/>
    </reaction>
</comment>
<comment type="catalytic activity">
    <reaction evidence="3">
        <text>(6R)-L-erythro-5,6,7,8-tetrahydrobiopterin(out) + a dicarboxylate(in) = (6R)-L-erythro-5,6,7,8-tetrahydrobiopterin(in) + a dicarboxylate(out)</text>
        <dbReference type="Rhea" id="RHEA:76071"/>
        <dbReference type="ChEBI" id="CHEBI:28965"/>
        <dbReference type="ChEBI" id="CHEBI:59560"/>
    </reaction>
</comment>
<comment type="catalytic activity">
    <reaction evidence="3">
        <text>L-erythro-7,8-dihydrobiopterin(out) + a dicarboxylate(in) = L-erythro-7,8-dihydrobiopterin(in) + a dicarboxylate(out)</text>
        <dbReference type="Rhea" id="RHEA:76075"/>
        <dbReference type="ChEBI" id="CHEBI:28965"/>
        <dbReference type="ChEBI" id="CHEBI:43029"/>
    </reaction>
</comment>
<comment type="catalytic activity">
    <reaction evidence="3">
        <text>L-sepiapterin(out) + a dicarboxylate(in) = L-sepiapterin(in) + a dicarboxylate(out)</text>
        <dbReference type="Rhea" id="RHEA:76079"/>
        <dbReference type="ChEBI" id="CHEBI:28965"/>
        <dbReference type="ChEBI" id="CHEBI:194527"/>
    </reaction>
</comment>
<comment type="subcellular location">
    <subcellularLocation>
        <location evidence="7">Basolateral cell membrane</location>
        <topology evidence="7">Multi-pass membrane protein</topology>
    </subcellularLocation>
    <text evidence="1">Localizes on the brush border membrane of the choroid epithelial cells. Localizes to the basolateral membrane of the proximal tubular cells. Localizes on the abluminal and possibly, luminal membrane of the brain capillary endothelial cells (BCEC) (By similarity).</text>
</comment>
<comment type="similarity">
    <text evidence="7">Belongs to the major facilitator (TC 2.A.1) superfamily. Organic cation transporter (TC 2.A.1.19) family.</text>
</comment>
<name>S22A8_PONAB</name>
<gene>
    <name type="primary">SLC22A8</name>
    <name type="synonym">OAT3</name>
</gene>
<accession>Q5R9C4</accession>
<evidence type="ECO:0000250" key="1"/>
<evidence type="ECO:0000250" key="2">
    <source>
        <dbReference type="UniProtKB" id="O88909"/>
    </source>
</evidence>
<evidence type="ECO:0000250" key="3">
    <source>
        <dbReference type="UniProtKB" id="Q8TCC7"/>
    </source>
</evidence>
<evidence type="ECO:0000250" key="4">
    <source>
        <dbReference type="UniProtKB" id="Q9R1U7"/>
    </source>
</evidence>
<evidence type="ECO:0000255" key="5"/>
<evidence type="ECO:0000256" key="6">
    <source>
        <dbReference type="SAM" id="MobiDB-lite"/>
    </source>
</evidence>
<evidence type="ECO:0000305" key="7"/>
<keyword id="KW-1003">Cell membrane</keyword>
<keyword id="KW-0216">Detoxification</keyword>
<keyword id="KW-0325">Glycoprotein</keyword>
<keyword id="KW-0406">Ion transport</keyword>
<keyword id="KW-0445">Lipid transport</keyword>
<keyword id="KW-0472">Membrane</keyword>
<keyword id="KW-0597">Phosphoprotein</keyword>
<keyword id="KW-1185">Reference proteome</keyword>
<keyword id="KW-0812">Transmembrane</keyword>
<keyword id="KW-1133">Transmembrane helix</keyword>
<keyword id="KW-0813">Transport</keyword>
<reference key="1">
    <citation type="submission" date="2004-11" db="EMBL/GenBank/DDBJ databases">
        <authorList>
            <consortium name="The German cDNA consortium"/>
        </authorList>
    </citation>
    <scope>NUCLEOTIDE SEQUENCE [LARGE SCALE MRNA]</scope>
    <source>
        <tissue>Kidney</tissue>
    </source>
</reference>
<feature type="chain" id="PRO_0000273443" description="Organic anion transporter 3">
    <location>
        <begin position="1"/>
        <end position="542"/>
    </location>
</feature>
<feature type="topological domain" description="Cytoplasmic" evidence="5">
    <location>
        <begin position="1"/>
        <end position="20"/>
    </location>
</feature>
<feature type="transmembrane region" description="Helical" evidence="5">
    <location>
        <begin position="21"/>
        <end position="41"/>
    </location>
</feature>
<feature type="topological domain" description="Extracellular" evidence="5">
    <location>
        <begin position="42"/>
        <end position="123"/>
    </location>
</feature>
<feature type="transmembrane region" description="Helical" evidence="5">
    <location>
        <begin position="124"/>
        <end position="144"/>
    </location>
</feature>
<feature type="topological domain" description="Cytoplasmic" evidence="5">
    <location>
        <begin position="145"/>
        <end position="154"/>
    </location>
</feature>
<feature type="transmembrane region" description="Helical" evidence="5">
    <location>
        <begin position="155"/>
        <end position="175"/>
    </location>
</feature>
<feature type="topological domain" description="Extracellular" evidence="5">
    <location>
        <position position="176"/>
    </location>
</feature>
<feature type="transmembrane region" description="Helical" evidence="5">
    <location>
        <begin position="177"/>
        <end position="197"/>
    </location>
</feature>
<feature type="topological domain" description="Cytoplasmic" evidence="5">
    <location>
        <begin position="198"/>
        <end position="212"/>
    </location>
</feature>
<feature type="transmembrane region" description="Helical" evidence="5">
    <location>
        <begin position="213"/>
        <end position="233"/>
    </location>
</feature>
<feature type="topological domain" description="Extracellular" evidence="5">
    <location>
        <begin position="234"/>
        <end position="236"/>
    </location>
</feature>
<feature type="transmembrane region" description="Helical" evidence="5">
    <location>
        <begin position="237"/>
        <end position="257"/>
    </location>
</feature>
<feature type="topological domain" description="Cytoplasmic" evidence="5">
    <location>
        <begin position="258"/>
        <end position="327"/>
    </location>
</feature>
<feature type="transmembrane region" description="Helical" evidence="5">
    <location>
        <begin position="328"/>
        <end position="348"/>
    </location>
</feature>
<feature type="topological domain" description="Extracellular" evidence="5">
    <location>
        <begin position="349"/>
        <end position="354"/>
    </location>
</feature>
<feature type="transmembrane region" description="Helical" evidence="5">
    <location>
        <begin position="355"/>
        <end position="375"/>
    </location>
</feature>
<feature type="topological domain" description="Cytoplasmic" evidence="5">
    <location>
        <begin position="376"/>
        <end position="386"/>
    </location>
</feature>
<feature type="transmembrane region" description="Helical" evidence="5">
    <location>
        <begin position="387"/>
        <end position="407"/>
    </location>
</feature>
<feature type="topological domain" description="Extracellular" evidence="5">
    <location>
        <begin position="408"/>
        <end position="471"/>
    </location>
</feature>
<feature type="transmembrane region" description="Helical" evidence="5">
    <location>
        <begin position="472"/>
        <end position="492"/>
    </location>
</feature>
<feature type="topological domain" description="Cytoplasmic" evidence="5">
    <location>
        <begin position="493"/>
        <end position="542"/>
    </location>
</feature>
<feature type="region of interest" description="Disordered" evidence="6">
    <location>
        <begin position="515"/>
        <end position="542"/>
    </location>
</feature>
<feature type="compositionally biased region" description="Basic and acidic residues" evidence="6">
    <location>
        <begin position="517"/>
        <end position="527"/>
    </location>
</feature>
<feature type="modified residue" description="Phosphoserine" evidence="4">
    <location>
        <position position="4"/>
    </location>
</feature>
<feature type="glycosylation site" description="N-linked (GlcNAc...) asparagine" evidence="5">
    <location>
        <position position="86"/>
    </location>
</feature>
<protein>
    <recommendedName>
        <fullName>Organic anion transporter 3</fullName>
        <shortName>OAT3</shortName>
    </recommendedName>
    <alternativeName>
        <fullName>Organic anion/dicarboxylate exchanger</fullName>
    </alternativeName>
    <alternativeName>
        <fullName>Solute carrier family 22 member 8</fullName>
    </alternativeName>
</protein>
<dbReference type="EMBL" id="CR859465">
    <property type="protein sequence ID" value="CAH91636.1"/>
    <property type="molecule type" value="mRNA"/>
</dbReference>
<dbReference type="RefSeq" id="NP_001125961.1">
    <property type="nucleotide sequence ID" value="NM_001132489.1"/>
</dbReference>
<dbReference type="SMR" id="Q5R9C4"/>
<dbReference type="FunCoup" id="Q5R9C4">
    <property type="interactions" value="55"/>
</dbReference>
<dbReference type="STRING" id="9601.ENSPPYP00000003623"/>
<dbReference type="GlyCosmos" id="Q5R9C4">
    <property type="glycosylation" value="1 site, No reported glycans"/>
</dbReference>
<dbReference type="GeneID" id="100172896"/>
<dbReference type="KEGG" id="pon:100172896"/>
<dbReference type="CTD" id="9376"/>
<dbReference type="eggNOG" id="KOG0255">
    <property type="taxonomic scope" value="Eukaryota"/>
</dbReference>
<dbReference type="InParanoid" id="Q5R9C4"/>
<dbReference type="OrthoDB" id="2544694at2759"/>
<dbReference type="Proteomes" id="UP000001595">
    <property type="component" value="Unplaced"/>
</dbReference>
<dbReference type="GO" id="GO:0016324">
    <property type="term" value="C:apical plasma membrane"/>
    <property type="evidence" value="ECO:0007669"/>
    <property type="project" value="UniProtKB-ARBA"/>
</dbReference>
<dbReference type="GO" id="GO:0016323">
    <property type="term" value="C:basolateral plasma membrane"/>
    <property type="evidence" value="ECO:0007669"/>
    <property type="project" value="UniProtKB-SubCell"/>
</dbReference>
<dbReference type="GO" id="GO:0015297">
    <property type="term" value="F:antiporter activity"/>
    <property type="evidence" value="ECO:0000250"/>
    <property type="project" value="UniProtKB"/>
</dbReference>
<dbReference type="GO" id="GO:0008514">
    <property type="term" value="F:organic anion transmembrane transporter activity"/>
    <property type="evidence" value="ECO:0000250"/>
    <property type="project" value="UniProtKB"/>
</dbReference>
<dbReference type="GO" id="GO:0042910">
    <property type="term" value="F:xenobiotic transmembrane transporter activity"/>
    <property type="evidence" value="ECO:0000250"/>
    <property type="project" value="UniProtKB"/>
</dbReference>
<dbReference type="GO" id="GO:0006811">
    <property type="term" value="P:monoatomic ion transport"/>
    <property type="evidence" value="ECO:0007669"/>
    <property type="project" value="UniProtKB-KW"/>
</dbReference>
<dbReference type="GO" id="GO:0015732">
    <property type="term" value="P:prostaglandin transport"/>
    <property type="evidence" value="ECO:0000250"/>
    <property type="project" value="UniProtKB"/>
</dbReference>
<dbReference type="GO" id="GO:0009636">
    <property type="term" value="P:response to toxic substance"/>
    <property type="evidence" value="ECO:0007669"/>
    <property type="project" value="UniProtKB-KW"/>
</dbReference>
<dbReference type="FunFam" id="1.20.1250.20:FF:000023">
    <property type="entry name" value="Solute carrier family 22 member 6"/>
    <property type="match status" value="1"/>
</dbReference>
<dbReference type="Gene3D" id="1.20.1250.20">
    <property type="entry name" value="MFS general substrate transporter like domains"/>
    <property type="match status" value="1"/>
</dbReference>
<dbReference type="InterPro" id="IPR020846">
    <property type="entry name" value="MFS_dom"/>
</dbReference>
<dbReference type="InterPro" id="IPR005828">
    <property type="entry name" value="MFS_sugar_transport-like"/>
</dbReference>
<dbReference type="InterPro" id="IPR036259">
    <property type="entry name" value="MFS_trans_sf"/>
</dbReference>
<dbReference type="InterPro" id="IPR004749">
    <property type="entry name" value="Orgcat_transp/SVOP"/>
</dbReference>
<dbReference type="InterPro" id="IPR005829">
    <property type="entry name" value="Sugar_transporter_CS"/>
</dbReference>
<dbReference type="NCBIfam" id="TIGR00898">
    <property type="entry name" value="2A0119"/>
    <property type="match status" value="1"/>
</dbReference>
<dbReference type="PANTHER" id="PTHR24064">
    <property type="entry name" value="SOLUTE CARRIER FAMILY 22 MEMBER"/>
    <property type="match status" value="1"/>
</dbReference>
<dbReference type="Pfam" id="PF00083">
    <property type="entry name" value="Sugar_tr"/>
    <property type="match status" value="1"/>
</dbReference>
<dbReference type="SUPFAM" id="SSF103473">
    <property type="entry name" value="MFS general substrate transporter"/>
    <property type="match status" value="1"/>
</dbReference>
<dbReference type="PROSITE" id="PS50850">
    <property type="entry name" value="MFS"/>
    <property type="match status" value="1"/>
</dbReference>